<sequence>MGNSLLRENRRQQNTQEMPWNVRMQSPKQRTSRCWDHHIAEGCFCLPWKKILIFEKRQDSQNENERMSSTPIQDNVDQTYSEELCYTLINHRVLCTRPSGNSAEEYYENVPCKAERPRESLGGTETEYSLLHMPSTDPRHARSPEDEYELLMPHRISSHFLQQPRPLMAPSETQFSHL</sequence>
<proteinExistence type="evidence at protein level"/>
<organism>
    <name type="scientific">Homo sapiens</name>
    <name type="common">Human</name>
    <dbReference type="NCBI Taxonomy" id="9606"/>
    <lineage>
        <taxon>Eukaryota</taxon>
        <taxon>Metazoa</taxon>
        <taxon>Chordata</taxon>
        <taxon>Craniata</taxon>
        <taxon>Vertebrata</taxon>
        <taxon>Euteleostomi</taxon>
        <taxon>Mammalia</taxon>
        <taxon>Eutheria</taxon>
        <taxon>Euarchontoglires</taxon>
        <taxon>Primates</taxon>
        <taxon>Haplorrhini</taxon>
        <taxon>Catarrhini</taxon>
        <taxon>Hominidae</taxon>
        <taxon>Homo</taxon>
    </lineage>
</organism>
<accession>Q8N6F7</accession>
<accession>C9JD17</accession>
<accession>C9JUG6</accession>
<dbReference type="EMBL" id="AY212246">
    <property type="protein sequence ID" value="AAO22147.1"/>
    <property type="molecule type" value="mRNA"/>
</dbReference>
<dbReference type="EMBL" id="AF521911">
    <property type="protein sequence ID" value="AAO21701.1"/>
    <property type="molecule type" value="mRNA"/>
</dbReference>
<dbReference type="EMBL" id="AC128688">
    <property type="status" value="NOT_ANNOTATED_CDS"/>
    <property type="molecule type" value="Genomic_DNA"/>
</dbReference>
<dbReference type="EMBL" id="BC030506">
    <property type="protein sequence ID" value="AAH30506.1"/>
    <property type="molecule type" value="mRNA"/>
</dbReference>
<dbReference type="EMBL" id="BM456595">
    <property type="status" value="NOT_ANNOTATED_CDS"/>
    <property type="molecule type" value="mRNA"/>
</dbReference>
<dbReference type="CCDS" id="CCDS2964.1">
    <molecule id="Q8N6F7-1"/>
</dbReference>
<dbReference type="CCDS" id="CCDS54621.1">
    <molecule id="Q8N6F7-3"/>
</dbReference>
<dbReference type="CCDS" id="CCDS54622.1">
    <molecule id="Q8N6F7-2"/>
</dbReference>
<dbReference type="RefSeq" id="NP_001177188.1">
    <molecule id="Q8N6F7-2"/>
    <property type="nucleotide sequence ID" value="NM_001190259.2"/>
</dbReference>
<dbReference type="RefSeq" id="NP_001177189.1">
    <molecule id="Q8N6F7-3"/>
    <property type="nucleotide sequence ID" value="NM_001190260.2"/>
</dbReference>
<dbReference type="RefSeq" id="NP_689998.1">
    <molecule id="Q8N6F7-1"/>
    <property type="nucleotide sequence ID" value="NM_152785.5"/>
</dbReference>
<dbReference type="BioGRID" id="129200">
    <property type="interactions" value="5"/>
</dbReference>
<dbReference type="FunCoup" id="Q8N6F7">
    <property type="interactions" value="15"/>
</dbReference>
<dbReference type="IntAct" id="Q8N6F7">
    <property type="interactions" value="5"/>
</dbReference>
<dbReference type="STRING" id="9606.ENSP00000419485"/>
<dbReference type="iPTMnet" id="Q8N6F7"/>
<dbReference type="PhosphoSitePlus" id="Q8N6F7"/>
<dbReference type="SwissPalm" id="Q8N6F7"/>
<dbReference type="BioMuta" id="GCSAM"/>
<dbReference type="MassIVE" id="Q8N6F7"/>
<dbReference type="PaxDb" id="9606-ENSP00000419485"/>
<dbReference type="PeptideAtlas" id="Q8N6F7"/>
<dbReference type="ProteomicsDB" id="11728"/>
<dbReference type="ProteomicsDB" id="72164">
    <molecule id="Q8N6F7-1"/>
</dbReference>
<dbReference type="ProteomicsDB" id="9668"/>
<dbReference type="Antibodypedia" id="1196">
    <property type="antibodies" value="202 antibodies from 32 providers"/>
</dbReference>
<dbReference type="DNASU" id="257144"/>
<dbReference type="Ensembl" id="ENST00000308910.9">
    <molecule id="Q8N6F7-1"/>
    <property type="protein sequence ID" value="ENSP00000309487.4"/>
    <property type="gene ID" value="ENSG00000174500.13"/>
</dbReference>
<dbReference type="Ensembl" id="ENST00000460387.6">
    <molecule id="Q8N6F7-3"/>
    <property type="protein sequence ID" value="ENSP00000420603.2"/>
    <property type="gene ID" value="ENSG00000174500.13"/>
</dbReference>
<dbReference type="Ensembl" id="ENST00000484193.5">
    <molecule id="Q8N6F7-2"/>
    <property type="protein sequence ID" value="ENSP00000419485.1"/>
    <property type="gene ID" value="ENSG00000174500.13"/>
</dbReference>
<dbReference type="Ensembl" id="ENST00000643065.1">
    <molecule id="Q8N6F7-2"/>
    <property type="protein sequence ID" value="ENSP00000493535.1"/>
    <property type="gene ID" value="ENSG00000284925.2"/>
</dbReference>
<dbReference type="Ensembl" id="ENST00000644247.1">
    <molecule id="Q8N6F7-3"/>
    <property type="protein sequence ID" value="ENSP00000494547.1"/>
    <property type="gene ID" value="ENSG00000284925.2"/>
</dbReference>
<dbReference type="Ensembl" id="ENST00000646639.2">
    <molecule id="Q8N6F7-1"/>
    <property type="protein sequence ID" value="ENSP00000496265.1"/>
    <property type="gene ID" value="ENSG00000284925.2"/>
</dbReference>
<dbReference type="GeneID" id="257144"/>
<dbReference type="KEGG" id="hsa:257144"/>
<dbReference type="MANE-Select" id="ENST00000308910.9">
    <property type="protein sequence ID" value="ENSP00000309487.4"/>
    <property type="RefSeq nucleotide sequence ID" value="NM_152785.5"/>
    <property type="RefSeq protein sequence ID" value="NP_689998.1"/>
</dbReference>
<dbReference type="UCSC" id="uc003dys.2">
    <molecule id="Q8N6F7-1"/>
    <property type="organism name" value="human"/>
</dbReference>
<dbReference type="AGR" id="HGNC:20253"/>
<dbReference type="CTD" id="257144"/>
<dbReference type="DisGeNET" id="257144"/>
<dbReference type="GeneCards" id="GCSAM"/>
<dbReference type="HGNC" id="HGNC:20253">
    <property type="gene designation" value="GCSAM"/>
</dbReference>
<dbReference type="HPA" id="ENSG00000174500">
    <property type="expression patterns" value="Group enriched (lymphoid tissue, skin)"/>
</dbReference>
<dbReference type="MIM" id="607792">
    <property type="type" value="gene"/>
</dbReference>
<dbReference type="neXtProt" id="NX_Q8N6F7"/>
<dbReference type="OpenTargets" id="ENSG00000174500"/>
<dbReference type="PharmGKB" id="PA134980592"/>
<dbReference type="VEuPathDB" id="HostDB:ENSG00000174500"/>
<dbReference type="eggNOG" id="ENOG502TDUK">
    <property type="taxonomic scope" value="Eukaryota"/>
</dbReference>
<dbReference type="GeneTree" id="ENSGT00940000158134"/>
<dbReference type="HOGENOM" id="CLU_126867_0_0_1"/>
<dbReference type="InParanoid" id="Q8N6F7"/>
<dbReference type="OMA" id="RCWDCHI"/>
<dbReference type="OrthoDB" id="9829486at2759"/>
<dbReference type="PAN-GO" id="Q8N6F7">
    <property type="GO annotations" value="2 GO annotations based on evolutionary models"/>
</dbReference>
<dbReference type="PhylomeDB" id="Q8N6F7"/>
<dbReference type="TreeFam" id="TF338596"/>
<dbReference type="PathwayCommons" id="Q8N6F7"/>
<dbReference type="SignaLink" id="Q8N6F7"/>
<dbReference type="SIGNOR" id="Q8N6F7"/>
<dbReference type="BioGRID-ORCS" id="257144">
    <property type="hits" value="17 hits in 1118 CRISPR screens"/>
</dbReference>
<dbReference type="GenomeRNAi" id="257144"/>
<dbReference type="Pharos" id="Q8N6F7">
    <property type="development level" value="Tbio"/>
</dbReference>
<dbReference type="PRO" id="PR:Q8N6F7"/>
<dbReference type="Proteomes" id="UP000005640">
    <property type="component" value="Chromosome 3"/>
</dbReference>
<dbReference type="RNAct" id="Q8N6F7">
    <property type="molecule type" value="protein"/>
</dbReference>
<dbReference type="Bgee" id="ENSG00000174500">
    <property type="expression patterns" value="Expressed in lymph node and 89 other cell types or tissues"/>
</dbReference>
<dbReference type="ExpressionAtlas" id="Q8N6F7">
    <property type="expression patterns" value="baseline and differential"/>
</dbReference>
<dbReference type="GO" id="GO:0005737">
    <property type="term" value="C:cytoplasm"/>
    <property type="evidence" value="ECO:0007669"/>
    <property type="project" value="UniProtKB-SubCell"/>
</dbReference>
<dbReference type="GO" id="GO:0005886">
    <property type="term" value="C:plasma membrane"/>
    <property type="evidence" value="ECO:0007669"/>
    <property type="project" value="UniProtKB-SubCell"/>
</dbReference>
<dbReference type="GO" id="GO:0003779">
    <property type="term" value="F:actin binding"/>
    <property type="evidence" value="ECO:0000353"/>
    <property type="project" value="UniProtKB"/>
</dbReference>
<dbReference type="GO" id="GO:0045159">
    <property type="term" value="F:myosin II binding"/>
    <property type="evidence" value="ECO:0000353"/>
    <property type="project" value="UniProtKB"/>
</dbReference>
<dbReference type="GO" id="GO:0019901">
    <property type="term" value="F:protein kinase binding"/>
    <property type="evidence" value="ECO:0000353"/>
    <property type="project" value="UniProtKB"/>
</dbReference>
<dbReference type="GO" id="GO:2000402">
    <property type="term" value="P:negative regulation of lymphocyte migration"/>
    <property type="evidence" value="ECO:0000315"/>
    <property type="project" value="UniProtKB"/>
</dbReference>
<dbReference type="GO" id="GO:0050855">
    <property type="term" value="P:regulation of B cell receptor signaling pathway"/>
    <property type="evidence" value="ECO:0000315"/>
    <property type="project" value="UniProtKB"/>
</dbReference>
<dbReference type="InterPro" id="IPR031364">
    <property type="entry name" value="GC_assoc_lym"/>
</dbReference>
<dbReference type="PANTHER" id="PTHR35351:SF2">
    <property type="entry name" value="GERMINAL CENTER-ASSOCIATED SIGNALING AND MOTILITY PROTEIN"/>
    <property type="match status" value="1"/>
</dbReference>
<dbReference type="PANTHER" id="PTHR35351">
    <property type="entry name" value="GERMINAL CENTER-ASSOCIATED SIGNALING AND MOTILITY-LIKE PROTEIN"/>
    <property type="match status" value="1"/>
</dbReference>
<dbReference type="Pfam" id="PF15666">
    <property type="entry name" value="HGAL"/>
    <property type="match status" value="1"/>
</dbReference>
<protein>
    <recommendedName>
        <fullName>Germinal center-associated signaling and motility protein</fullName>
    </recommendedName>
    <alternativeName>
        <fullName>Germinal center B-cell-expressed transcript 2 protein</fullName>
    </alternativeName>
    <alternativeName>
        <fullName>Germinal center-associated lymphoma protein</fullName>
        <shortName>hGAL</shortName>
    </alternativeName>
</protein>
<evidence type="ECO:0000250" key="1">
    <source>
        <dbReference type="UniProtKB" id="Q6RFH4"/>
    </source>
</evidence>
<evidence type="ECO:0000269" key="2">
    <source>
    </source>
</evidence>
<evidence type="ECO:0000269" key="3">
    <source>
    </source>
</evidence>
<evidence type="ECO:0000269" key="4">
    <source>
    </source>
</evidence>
<evidence type="ECO:0000269" key="5">
    <source>
    </source>
</evidence>
<evidence type="ECO:0000269" key="6">
    <source>
    </source>
</evidence>
<evidence type="ECO:0000269" key="7">
    <source>
    </source>
</evidence>
<evidence type="ECO:0000269" key="8">
    <source>
    </source>
</evidence>
<evidence type="ECO:0000303" key="9">
    <source>
    </source>
</evidence>
<evidence type="ECO:0000305" key="10"/>
<evidence type="ECO:0007744" key="11">
    <source>
    </source>
</evidence>
<gene>
    <name type="primary">GCSAM</name>
    <name type="synonym">GAL</name>
    <name type="synonym">GCET2</name>
</gene>
<keyword id="KW-0025">Alternative splicing</keyword>
<keyword id="KW-1003">Cell membrane</keyword>
<keyword id="KW-0963">Cytoplasm</keyword>
<keyword id="KW-0472">Membrane</keyword>
<keyword id="KW-0597">Phosphoprotein</keyword>
<keyword id="KW-1267">Proteomics identification</keyword>
<keyword id="KW-1185">Reference proteome</keyword>
<keyword id="KW-0832">Ubl conjugation</keyword>
<comment type="function">
    <text evidence="5 6 7">Involved in the negative regulation of lymphocyte motility. It mediates the migration-inhibitory effects of IL6. Serves as a positive regulator of the RhoA signaling pathway. Enhancement of RhoA activation results in inhibition of lymphocyte and lymphoma cell motility by activation of its downstream effector ROCK. Is a regulator of B-cell receptor signaling, that acts through SYK kinase activation.</text>
</comment>
<comment type="subunit">
    <text evidence="5 6 7">Interacts with ACTB and MYH2; the interaction with MYH2 is increased by IL6-induced phosphorylation. Interacts (via C-terminus) with ARHGEF11 (via DH domain). Interacts with ARHGEF12. Interacts with SYK; the interaction increases after B-cell receptor stimulation, resulting in enhanced SYK autophosphorylation and activity.</text>
</comment>
<comment type="interaction">
    <interactant intactId="EBI-10267082">
        <id>Q8N6F7</id>
    </interactant>
    <interactant intactId="EBI-541426">
        <id>Q9BXS5</id>
        <label>AP1M1</label>
    </interactant>
    <organismsDiffer>false</organismsDiffer>
    <experiments>3</experiments>
</comment>
<comment type="interaction">
    <interactant intactId="EBI-10267082">
        <id>Q8N6F7</id>
    </interactant>
    <interactant intactId="EBI-743771">
        <id>Q92624</id>
        <label>APPBP2</label>
    </interactant>
    <organismsDiffer>false</organismsDiffer>
    <experiments>6</experiments>
</comment>
<comment type="interaction">
    <interactant intactId="EBI-10267082">
        <id>Q8N6F7</id>
    </interactant>
    <interactant intactId="EBI-743033">
        <id>Q9NZN8</id>
        <label>CNOT2</label>
    </interactant>
    <organismsDiffer>false</organismsDiffer>
    <experiments>3</experiments>
</comment>
<comment type="interaction">
    <interactant intactId="EBI-10267082">
        <id>Q8N6F7</id>
    </interactant>
    <interactant intactId="EBI-3867333">
        <id>A8MQ03</id>
        <label>CYSRT1</label>
    </interactant>
    <organismsDiffer>false</organismsDiffer>
    <experiments>3</experiments>
</comment>
<comment type="subcellular location">
    <subcellularLocation>
        <location>Cytoplasm</location>
    </subcellularLocation>
    <subcellularLocation>
        <location evidence="8">Cell membrane</location>
    </subcellularLocation>
    <text>It relocalizes from the cytoplasm to podosome-like structures upon cell treatment with IL6.</text>
</comment>
<comment type="alternative products">
    <event type="alternative splicing"/>
    <isoform>
        <id>Q8N6F7-1</id>
        <name>1</name>
        <sequence type="displayed"/>
    </isoform>
    <isoform>
        <id>Q8N6F7-2</id>
        <name>2</name>
        <sequence type="described" ref="VSP_046085"/>
    </isoform>
    <isoform>
        <id>Q8N6F7-3</id>
        <name>3</name>
        <sequence type="described" ref="VSP_046984"/>
    </isoform>
</comment>
<comment type="tissue specificity">
    <text evidence="2 3 4">Expressed in diffuse large B-cell lymphoma (DLBCL) and several germinal center (GC)-like lymphoma cell lines (at protein level). Highly expressed in normal GC lymphocytes and GC-derived malignancies. Expressed in thymus and spleen.</text>
</comment>
<comment type="induction">
    <text evidence="2">Up-regulated by IL4/interleukin-4.</text>
</comment>
<comment type="PTM">
    <text evidence="5">Phosphorylation on tyrosine residues can be induced by IL6. Phosphorylation is mediated by LYN.</text>
</comment>
<comment type="PTM">
    <text evidence="8">Targeted by the ubiquitin E3 ligase subunit FBXO10 to mediate its ubiquitination and degradation.</text>
</comment>
<feature type="chain" id="PRO_0000256228" description="Germinal center-associated signaling and motility protein">
    <location>
        <begin position="1"/>
        <end position="178"/>
    </location>
</feature>
<feature type="modified residue" description="Phosphoserine" evidence="1">
    <location>
        <position position="99"/>
    </location>
</feature>
<feature type="modified residue" description="Phosphotyrosine" evidence="11">
    <location>
        <position position="148"/>
    </location>
</feature>
<feature type="splice variant" id="VSP_046085" description="In isoform 2." evidence="9">
    <original>N</original>
    <variation>NSF</variation>
    <location>
        <position position="9"/>
    </location>
</feature>
<feature type="splice variant" id="VSP_046984" description="In isoform 3." evidence="10">
    <location>
        <begin position="34"/>
        <end position="48"/>
    </location>
</feature>
<feature type="mutagenesis site" description="Loss of FBXO10-mediated ubiquitination and degradation." evidence="8">
    <original>H</original>
    <variation>A</variation>
    <location>
        <position position="91"/>
    </location>
</feature>
<feature type="mutagenesis site" description="Does not affect the interaction with SYK." evidence="7">
    <original>YY</original>
    <variation>AA</variation>
    <location>
        <begin position="106"/>
        <end position="107"/>
    </location>
</feature>
<feature type="mutagenesis site" description="Does not affect IL6 induced phosphorylation. Does not affect the interaction with SYK." evidence="5 7">
    <original>Y</original>
    <variation>F</variation>
    <location>
        <position position="128"/>
    </location>
</feature>
<feature type="mutagenesis site" description="Prevents IL6 induced phosphorylation. Does not affect the interaction with SYK." evidence="5 7">
    <original>Y</original>
    <variation>F</variation>
    <location>
        <position position="148"/>
    </location>
</feature>
<reference key="1">
    <citation type="journal article" date="2003" name="Am. J. Pathol.">
        <title>Two newly characterized germinal center B-cell-associated genes, GCET1 and GCET2, have differential expression in normal and neoplastic B cells.</title>
        <authorList>
            <person name="Pan Z."/>
            <person name="Shen Y."/>
            <person name="Du C."/>
            <person name="Zhou G."/>
            <person name="Rosenwald A."/>
            <person name="Staudt L.M."/>
            <person name="Greiner T.C."/>
            <person name="McKeithan T.W."/>
            <person name="Chan W.C."/>
        </authorList>
    </citation>
    <scope>NUCLEOTIDE SEQUENCE [MRNA] (ISOFORM 1)</scope>
    <scope>TISSUE SPECIFICITY</scope>
</reference>
<reference key="2">
    <citation type="journal article" date="2003" name="Blood">
        <title>HGAL is a novel interleukin-4-inducible gene that strongly predicts survival in diffuse large B-cell lymphoma.</title>
        <authorList>
            <person name="Lossos I.S."/>
            <person name="Alizadeh A.A."/>
            <person name="Rajapaksa R."/>
            <person name="Tibshirani R."/>
            <person name="Levy R."/>
        </authorList>
    </citation>
    <scope>NUCLEOTIDE SEQUENCE [MRNA] (ISOFORM 1)</scope>
    <scope>INDUCTION</scope>
    <scope>TISSUE SPECIFICITY</scope>
</reference>
<reference key="3">
    <citation type="journal article" date="2006" name="Nature">
        <title>The DNA sequence, annotation and analysis of human chromosome 3.</title>
        <authorList>
            <person name="Muzny D.M."/>
            <person name="Scherer S.E."/>
            <person name="Kaul R."/>
            <person name="Wang J."/>
            <person name="Yu J."/>
            <person name="Sudbrak R."/>
            <person name="Buhay C.J."/>
            <person name="Chen R."/>
            <person name="Cree A."/>
            <person name="Ding Y."/>
            <person name="Dugan-Rocha S."/>
            <person name="Gill R."/>
            <person name="Gunaratne P."/>
            <person name="Harris R.A."/>
            <person name="Hawes A.C."/>
            <person name="Hernandez J."/>
            <person name="Hodgson A.V."/>
            <person name="Hume J."/>
            <person name="Jackson A."/>
            <person name="Khan Z.M."/>
            <person name="Kovar-Smith C."/>
            <person name="Lewis L.R."/>
            <person name="Lozado R.J."/>
            <person name="Metzker M.L."/>
            <person name="Milosavljevic A."/>
            <person name="Miner G.R."/>
            <person name="Morgan M.B."/>
            <person name="Nazareth L.V."/>
            <person name="Scott G."/>
            <person name="Sodergren E."/>
            <person name="Song X.-Z."/>
            <person name="Steffen D."/>
            <person name="Wei S."/>
            <person name="Wheeler D.A."/>
            <person name="Wright M.W."/>
            <person name="Worley K.C."/>
            <person name="Yuan Y."/>
            <person name="Zhang Z."/>
            <person name="Adams C.Q."/>
            <person name="Ansari-Lari M.A."/>
            <person name="Ayele M."/>
            <person name="Brown M.J."/>
            <person name="Chen G."/>
            <person name="Chen Z."/>
            <person name="Clendenning J."/>
            <person name="Clerc-Blankenburg K.P."/>
            <person name="Chen R."/>
            <person name="Chen Z."/>
            <person name="Davis C."/>
            <person name="Delgado O."/>
            <person name="Dinh H.H."/>
            <person name="Dong W."/>
            <person name="Draper H."/>
            <person name="Ernst S."/>
            <person name="Fu G."/>
            <person name="Gonzalez-Garay M.L."/>
            <person name="Garcia D.K."/>
            <person name="Gillett W."/>
            <person name="Gu J."/>
            <person name="Hao B."/>
            <person name="Haugen E."/>
            <person name="Havlak P."/>
            <person name="He X."/>
            <person name="Hennig S."/>
            <person name="Hu S."/>
            <person name="Huang W."/>
            <person name="Jackson L.R."/>
            <person name="Jacob L.S."/>
            <person name="Kelly S.H."/>
            <person name="Kube M."/>
            <person name="Levy R."/>
            <person name="Li Z."/>
            <person name="Liu B."/>
            <person name="Liu J."/>
            <person name="Liu W."/>
            <person name="Lu J."/>
            <person name="Maheshwari M."/>
            <person name="Nguyen B.-V."/>
            <person name="Okwuonu G.O."/>
            <person name="Palmeiri A."/>
            <person name="Pasternak S."/>
            <person name="Perez L.M."/>
            <person name="Phelps K.A."/>
            <person name="Plopper F.J."/>
            <person name="Qiang B."/>
            <person name="Raymond C."/>
            <person name="Rodriguez R."/>
            <person name="Saenphimmachak C."/>
            <person name="Santibanez J."/>
            <person name="Shen H."/>
            <person name="Shen Y."/>
            <person name="Subramanian S."/>
            <person name="Tabor P.E."/>
            <person name="Verduzco D."/>
            <person name="Waldron L."/>
            <person name="Wang J."/>
            <person name="Wang J."/>
            <person name="Wang Q."/>
            <person name="Williams G.A."/>
            <person name="Wong G.K.-S."/>
            <person name="Yao Z."/>
            <person name="Zhang J."/>
            <person name="Zhang X."/>
            <person name="Zhao G."/>
            <person name="Zhou J."/>
            <person name="Zhou Y."/>
            <person name="Nelson D."/>
            <person name="Lehrach H."/>
            <person name="Reinhardt R."/>
            <person name="Naylor S.L."/>
            <person name="Yang H."/>
            <person name="Olson M."/>
            <person name="Weinstock G."/>
            <person name="Gibbs R.A."/>
        </authorList>
    </citation>
    <scope>NUCLEOTIDE SEQUENCE [LARGE SCALE GENOMIC DNA]</scope>
</reference>
<reference key="4">
    <citation type="journal article" date="2004" name="Genome Res.">
        <title>The status, quality, and expansion of the NIH full-length cDNA project: the Mammalian Gene Collection (MGC).</title>
        <authorList>
            <consortium name="The MGC Project Team"/>
        </authorList>
    </citation>
    <scope>NUCLEOTIDE SEQUENCE [LARGE SCALE MRNA] (ISOFORMS 1 AND 2)</scope>
    <source>
        <tissue>Lymphoma</tissue>
    </source>
</reference>
<reference key="5">
    <citation type="journal article" date="2005" name="Blood">
        <title>Expression of the human germinal center-associated lymphoma (HGAL) protein, a new marker of germinal center B-cell derivation.</title>
        <authorList>
            <person name="Natkunam Y."/>
            <person name="Lossos I.S."/>
            <person name="Taidi B."/>
            <person name="Zhao S."/>
            <person name="Lu X."/>
            <person name="Ding F."/>
            <person name="Hammer A.S."/>
            <person name="Marafioti T."/>
            <person name="Byrne G.E. Jr."/>
            <person name="Levy S."/>
            <person name="Warnke R.A."/>
            <person name="Levy R."/>
        </authorList>
    </citation>
    <scope>SUBCELLULAR LOCATION</scope>
    <scope>TISSUE SPECIFICITY</scope>
</reference>
<reference key="6">
    <citation type="journal article" date="2007" name="Blood">
        <title>HGAL, a lymphoma prognostic biomarker, interacts with the cytoskeleton and mediates the effects of IL-6 on cell migration.</title>
        <authorList>
            <person name="Lu X."/>
            <person name="Chen J."/>
            <person name="Malumbres R."/>
            <person name="Cubedo Gil E."/>
            <person name="Helfman D.M."/>
            <person name="Lossos I.S."/>
        </authorList>
    </citation>
    <scope>FUNCTION</scope>
    <scope>SUBCELLULAR LOCATION</scope>
    <scope>INTERACTION WITH MYH2 AND ACTB</scope>
    <scope>PHOSPHORYLATION BY LYN</scope>
    <scope>MUTAGENESIS OF TYR-128 AND TYR-148</scope>
</reference>
<reference key="7">
    <citation type="journal article" date="2009" name="Sci. Signal.">
        <title>Quantitative phosphoproteomic analysis of T cell receptor signaling reveals system-wide modulation of protein-protein interactions.</title>
        <authorList>
            <person name="Mayya V."/>
            <person name="Lundgren D.H."/>
            <person name="Hwang S.-I."/>
            <person name="Rezaul K."/>
            <person name="Wu L."/>
            <person name="Eng J.K."/>
            <person name="Rodionov V."/>
            <person name="Han D.K."/>
        </authorList>
    </citation>
    <scope>PHOSPHORYLATION [LARGE SCALE ANALYSIS] AT TYR-148</scope>
    <scope>IDENTIFICATION BY MASS SPECTROMETRY [LARGE SCALE ANALYSIS]</scope>
    <source>
        <tissue>Leukemic T-cell</tissue>
    </source>
</reference>
<reference key="8">
    <citation type="journal article" date="2010" name="Blood">
        <title>HGAL, a germinal center specific protein, decreases lymphoma cell motility by modulation of the RhoA signaling pathway.</title>
        <authorList>
            <person name="Jiang X."/>
            <person name="Lu X."/>
            <person name="McNamara G."/>
            <person name="Liu X."/>
            <person name="Cubedo E."/>
            <person name="Sarosiek K.A."/>
            <person name="Sanchez-Garcia I."/>
            <person name="Helfman D.M."/>
            <person name="Lossos I.S."/>
        </authorList>
    </citation>
    <scope>FUNCTION</scope>
    <scope>SUBCELLULAR LOCATION</scope>
    <scope>INTERACTION WITH ARHGEF11 AND ARHGEF12</scope>
</reference>
<reference key="9">
    <citation type="journal article" date="2011" name="BMC Syst. Biol.">
        <title>Initial characterization of the human central proteome.</title>
        <authorList>
            <person name="Burkard T.R."/>
            <person name="Planyavsky M."/>
            <person name="Kaupe I."/>
            <person name="Breitwieser F.P."/>
            <person name="Buerckstuemmer T."/>
            <person name="Bennett K.L."/>
            <person name="Superti-Furga G."/>
            <person name="Colinge J."/>
        </authorList>
    </citation>
    <scope>IDENTIFICATION BY MASS SPECTROMETRY [LARGE SCALE ANALYSIS]</scope>
</reference>
<reference key="10">
    <citation type="journal article" date="2013" name="Nat. Commun.">
        <title>Germinal centre protein HGAL promotes lymphoid hyperplasia and amyloidosis via BCR-mediated Syk activation.</title>
        <authorList>
            <person name="Romero-Camarero I."/>
            <person name="Jiang X."/>
            <person name="Natkunam Y."/>
            <person name="Lu X."/>
            <person name="Vicente-Duenas C."/>
            <person name="Gonzalez-Herrero I."/>
            <person name="Flores T."/>
            <person name="Garcia J.L."/>
            <person name="McNamara G."/>
            <person name="Kunder C."/>
            <person name="Zhao S."/>
            <person name="Segura V."/>
            <person name="Fontan L."/>
            <person name="Martinez-Climent J.A."/>
            <person name="Garcia-Criado F.J."/>
            <person name="Theis J.D."/>
            <person name="Dogan A."/>
            <person name="Campos-Sanchez E."/>
            <person name="Green M.R."/>
            <person name="Alizadeh A.A."/>
            <person name="Cobaleda C."/>
            <person name="Sanchez-Garcia I."/>
            <person name="Lossos I.S."/>
        </authorList>
    </citation>
    <scope>FUNCTION AS REGULATOR OF B-CELL RECEPTOR SIGNALING</scope>
    <scope>INTERACTION WITH SYK</scope>
    <scope>SUBCELLULAR LOCATION</scope>
    <scope>MUTAGENESIS OF 106-TYR-TYR-107; TYR-128 AND TYR-148</scope>
</reference>
<reference key="11">
    <citation type="journal article" date="2020" name="Leukemia">
        <title>Recent BCR stimulation induces a negative autoregulatory loop via FBXO10 mediated degradation of HGAL.</title>
        <authorList>
            <person name="Guo F."/>
            <person name="Luo Y."/>
            <person name="Jiang X."/>
            <person name="Lu X."/>
            <person name="Roberti D."/>
            <person name="Lossos C."/>
            <person name="Kunkalla K."/>
            <person name="Magistri M."/>
            <person name="Rui L."/>
            <person name="Verdun R."/>
            <person name="Vega F."/>
            <person name="Moy V.T."/>
            <person name="Lossos I.S."/>
        </authorList>
    </citation>
    <scope>SUBCELLULAR LOCATION</scope>
    <scope>UBIQUITINATION BY FBXO10</scope>
    <scope>MUTAGENESIS OF HIS-91</scope>
</reference>
<name>GCSAM_HUMAN</name>